<accession>A8EU19</accession>
<comment type="function">
    <text evidence="1">Involved in mRNA degradation. Catalyzes the phosphorolysis of single-stranded polyribonucleotides processively in the 3'- to 5'-direction.</text>
</comment>
<comment type="catalytic activity">
    <reaction evidence="1">
        <text>RNA(n+1) + phosphate = RNA(n) + a ribonucleoside 5'-diphosphate</text>
        <dbReference type="Rhea" id="RHEA:22096"/>
        <dbReference type="Rhea" id="RHEA-COMP:14527"/>
        <dbReference type="Rhea" id="RHEA-COMP:17342"/>
        <dbReference type="ChEBI" id="CHEBI:43474"/>
        <dbReference type="ChEBI" id="CHEBI:57930"/>
        <dbReference type="ChEBI" id="CHEBI:140395"/>
        <dbReference type="EC" id="2.7.7.8"/>
    </reaction>
</comment>
<comment type="cofactor">
    <cofactor evidence="1">
        <name>Mg(2+)</name>
        <dbReference type="ChEBI" id="CHEBI:18420"/>
    </cofactor>
</comment>
<comment type="subcellular location">
    <subcellularLocation>
        <location evidence="1">Cytoplasm</location>
    </subcellularLocation>
</comment>
<comment type="similarity">
    <text evidence="1">Belongs to the polyribonucleotide nucleotidyltransferase family.</text>
</comment>
<dbReference type="EC" id="2.7.7.8" evidence="1"/>
<dbReference type="EMBL" id="CP000361">
    <property type="protein sequence ID" value="ABV67443.1"/>
    <property type="molecule type" value="Genomic_DNA"/>
</dbReference>
<dbReference type="RefSeq" id="WP_012012877.1">
    <property type="nucleotide sequence ID" value="NC_009850.1"/>
</dbReference>
<dbReference type="SMR" id="A8EU19"/>
<dbReference type="STRING" id="367737.Abu_1183"/>
<dbReference type="GeneID" id="24305360"/>
<dbReference type="KEGG" id="abu:Abu_1183"/>
<dbReference type="eggNOG" id="COG1185">
    <property type="taxonomic scope" value="Bacteria"/>
</dbReference>
<dbReference type="HOGENOM" id="CLU_004217_2_2_7"/>
<dbReference type="Proteomes" id="UP000001136">
    <property type="component" value="Chromosome"/>
</dbReference>
<dbReference type="GO" id="GO:0005829">
    <property type="term" value="C:cytosol"/>
    <property type="evidence" value="ECO:0007669"/>
    <property type="project" value="TreeGrafter"/>
</dbReference>
<dbReference type="GO" id="GO:0000175">
    <property type="term" value="F:3'-5'-RNA exonuclease activity"/>
    <property type="evidence" value="ECO:0007669"/>
    <property type="project" value="TreeGrafter"/>
</dbReference>
<dbReference type="GO" id="GO:0000287">
    <property type="term" value="F:magnesium ion binding"/>
    <property type="evidence" value="ECO:0007669"/>
    <property type="project" value="UniProtKB-UniRule"/>
</dbReference>
<dbReference type="GO" id="GO:0004654">
    <property type="term" value="F:polyribonucleotide nucleotidyltransferase activity"/>
    <property type="evidence" value="ECO:0007669"/>
    <property type="project" value="UniProtKB-UniRule"/>
</dbReference>
<dbReference type="GO" id="GO:0003723">
    <property type="term" value="F:RNA binding"/>
    <property type="evidence" value="ECO:0007669"/>
    <property type="project" value="UniProtKB-UniRule"/>
</dbReference>
<dbReference type="GO" id="GO:0006402">
    <property type="term" value="P:mRNA catabolic process"/>
    <property type="evidence" value="ECO:0007669"/>
    <property type="project" value="UniProtKB-UniRule"/>
</dbReference>
<dbReference type="GO" id="GO:0006396">
    <property type="term" value="P:RNA processing"/>
    <property type="evidence" value="ECO:0007669"/>
    <property type="project" value="InterPro"/>
</dbReference>
<dbReference type="CDD" id="cd02393">
    <property type="entry name" value="KH-I_PNPase"/>
    <property type="match status" value="1"/>
</dbReference>
<dbReference type="CDD" id="cd11364">
    <property type="entry name" value="RNase_PH_PNPase_2"/>
    <property type="match status" value="1"/>
</dbReference>
<dbReference type="FunFam" id="3.30.1370.10:FF:000001">
    <property type="entry name" value="Polyribonucleotide nucleotidyltransferase"/>
    <property type="match status" value="1"/>
</dbReference>
<dbReference type="FunFam" id="3.30.230.70:FF:000026">
    <property type="entry name" value="Polyribonucleotide nucleotidyltransferase"/>
    <property type="match status" value="1"/>
</dbReference>
<dbReference type="FunFam" id="3.30.230.70:FF:000029">
    <property type="entry name" value="Polyribonucleotide nucleotidyltransferase"/>
    <property type="match status" value="1"/>
</dbReference>
<dbReference type="Gene3D" id="3.30.230.70">
    <property type="entry name" value="GHMP Kinase, N-terminal domain"/>
    <property type="match status" value="2"/>
</dbReference>
<dbReference type="Gene3D" id="3.30.1370.10">
    <property type="entry name" value="K Homology domain, type 1"/>
    <property type="match status" value="1"/>
</dbReference>
<dbReference type="Gene3D" id="2.40.50.140">
    <property type="entry name" value="Nucleic acid-binding proteins"/>
    <property type="match status" value="1"/>
</dbReference>
<dbReference type="HAMAP" id="MF_01595">
    <property type="entry name" value="PNPase"/>
    <property type="match status" value="1"/>
</dbReference>
<dbReference type="InterPro" id="IPR001247">
    <property type="entry name" value="ExoRNase_PH_dom1"/>
</dbReference>
<dbReference type="InterPro" id="IPR015847">
    <property type="entry name" value="ExoRNase_PH_dom2"/>
</dbReference>
<dbReference type="InterPro" id="IPR036345">
    <property type="entry name" value="ExoRNase_PH_dom2_sf"/>
</dbReference>
<dbReference type="InterPro" id="IPR004087">
    <property type="entry name" value="KH_dom"/>
</dbReference>
<dbReference type="InterPro" id="IPR004088">
    <property type="entry name" value="KH_dom_type_1"/>
</dbReference>
<dbReference type="InterPro" id="IPR036612">
    <property type="entry name" value="KH_dom_type_1_sf"/>
</dbReference>
<dbReference type="InterPro" id="IPR012340">
    <property type="entry name" value="NA-bd_OB-fold"/>
</dbReference>
<dbReference type="InterPro" id="IPR012162">
    <property type="entry name" value="PNPase"/>
</dbReference>
<dbReference type="InterPro" id="IPR027408">
    <property type="entry name" value="PNPase/RNase_PH_dom_sf"/>
</dbReference>
<dbReference type="InterPro" id="IPR015848">
    <property type="entry name" value="PNPase_PH_RNA-bd_bac/org-type"/>
</dbReference>
<dbReference type="InterPro" id="IPR020568">
    <property type="entry name" value="Ribosomal_Su5_D2-typ_SF"/>
</dbReference>
<dbReference type="InterPro" id="IPR003029">
    <property type="entry name" value="S1_domain"/>
</dbReference>
<dbReference type="NCBIfam" id="TIGR03591">
    <property type="entry name" value="polynuc_phos"/>
    <property type="match status" value="1"/>
</dbReference>
<dbReference type="NCBIfam" id="NF008805">
    <property type="entry name" value="PRK11824.1"/>
    <property type="match status" value="1"/>
</dbReference>
<dbReference type="PANTHER" id="PTHR11252">
    <property type="entry name" value="POLYRIBONUCLEOTIDE NUCLEOTIDYLTRANSFERASE"/>
    <property type="match status" value="1"/>
</dbReference>
<dbReference type="PANTHER" id="PTHR11252:SF0">
    <property type="entry name" value="POLYRIBONUCLEOTIDE NUCLEOTIDYLTRANSFERASE 1, MITOCHONDRIAL"/>
    <property type="match status" value="1"/>
</dbReference>
<dbReference type="Pfam" id="PF00013">
    <property type="entry name" value="KH_1"/>
    <property type="match status" value="1"/>
</dbReference>
<dbReference type="Pfam" id="PF03726">
    <property type="entry name" value="PNPase"/>
    <property type="match status" value="1"/>
</dbReference>
<dbReference type="Pfam" id="PF01138">
    <property type="entry name" value="RNase_PH"/>
    <property type="match status" value="2"/>
</dbReference>
<dbReference type="Pfam" id="PF03725">
    <property type="entry name" value="RNase_PH_C"/>
    <property type="match status" value="2"/>
</dbReference>
<dbReference type="Pfam" id="PF00575">
    <property type="entry name" value="S1"/>
    <property type="match status" value="1"/>
</dbReference>
<dbReference type="PIRSF" id="PIRSF005499">
    <property type="entry name" value="PNPase"/>
    <property type="match status" value="1"/>
</dbReference>
<dbReference type="SMART" id="SM00322">
    <property type="entry name" value="KH"/>
    <property type="match status" value="1"/>
</dbReference>
<dbReference type="SMART" id="SM00316">
    <property type="entry name" value="S1"/>
    <property type="match status" value="1"/>
</dbReference>
<dbReference type="SUPFAM" id="SSF54791">
    <property type="entry name" value="Eukaryotic type KH-domain (KH-domain type I)"/>
    <property type="match status" value="1"/>
</dbReference>
<dbReference type="SUPFAM" id="SSF50249">
    <property type="entry name" value="Nucleic acid-binding proteins"/>
    <property type="match status" value="1"/>
</dbReference>
<dbReference type="SUPFAM" id="SSF55666">
    <property type="entry name" value="Ribonuclease PH domain 2-like"/>
    <property type="match status" value="2"/>
</dbReference>
<dbReference type="SUPFAM" id="SSF54211">
    <property type="entry name" value="Ribosomal protein S5 domain 2-like"/>
    <property type="match status" value="2"/>
</dbReference>
<dbReference type="PROSITE" id="PS50084">
    <property type="entry name" value="KH_TYPE_1"/>
    <property type="match status" value="1"/>
</dbReference>
<dbReference type="PROSITE" id="PS50126">
    <property type="entry name" value="S1"/>
    <property type="match status" value="1"/>
</dbReference>
<keyword id="KW-0963">Cytoplasm</keyword>
<keyword id="KW-0460">Magnesium</keyword>
<keyword id="KW-0479">Metal-binding</keyword>
<keyword id="KW-0548">Nucleotidyltransferase</keyword>
<keyword id="KW-1185">Reference proteome</keyword>
<keyword id="KW-0694">RNA-binding</keyword>
<keyword id="KW-0808">Transferase</keyword>
<reference key="1">
    <citation type="journal article" date="2007" name="PLoS ONE">
        <title>The complete genome sequence and analysis of the Epsilonproteobacterium Arcobacter butzleri.</title>
        <authorList>
            <person name="Miller W.G."/>
            <person name="Parker C.T."/>
            <person name="Rubenfield M."/>
            <person name="Mendz G.L."/>
            <person name="Woesten M.M.S.M."/>
            <person name="Ussery D.W."/>
            <person name="Stolz J.F."/>
            <person name="Binnewies T.T."/>
            <person name="Hallin P.F."/>
            <person name="Wang G."/>
            <person name="Malek J.A."/>
            <person name="Rogosin A."/>
            <person name="Stanker L.H."/>
            <person name="Mandrell R.E."/>
        </authorList>
    </citation>
    <scope>NUCLEOTIDE SEQUENCE [LARGE SCALE GENOMIC DNA]</scope>
    <source>
        <strain>RM4018</strain>
    </source>
</reference>
<gene>
    <name evidence="1" type="primary">pnp</name>
    <name type="ordered locus">Abu_1183</name>
</gene>
<organism>
    <name type="scientific">Aliarcobacter butzleri (strain RM4018)</name>
    <name type="common">Arcobacter butzleri</name>
    <dbReference type="NCBI Taxonomy" id="367737"/>
    <lineage>
        <taxon>Bacteria</taxon>
        <taxon>Pseudomonadati</taxon>
        <taxon>Campylobacterota</taxon>
        <taxon>Epsilonproteobacteria</taxon>
        <taxon>Campylobacterales</taxon>
        <taxon>Arcobacteraceae</taxon>
        <taxon>Aliarcobacter</taxon>
    </lineage>
</organism>
<name>PNP_ALIB4</name>
<proteinExistence type="inferred from homology"/>
<evidence type="ECO:0000255" key="1">
    <source>
        <dbReference type="HAMAP-Rule" id="MF_01595"/>
    </source>
</evidence>
<sequence>MSKVCEFELNGKQEIFEFEKVAKQSNGAVLAKIGNAVVLATVVSEFDNPVSEDFTPLTVQYIEKTYAAAKLPGGFIKREGKPSDFETLTSRVIDRSLRPLFPKGYVYPTTITVMVLSADKNVDLQTLSLNAANAALYTSNLPIKKSVCGVRVGKIENTLVINPTNEQLENSTLDLYVAGSKEELLMIEMKTISSSELVEIDIEAFTKIHNTNEMDEDALVEAIAFAQNALKEANLTYEKAFEEVSKEKFEVELVKFTIEESVINYVRDNFSNDIKEAIKKLAKSERATQLKDVAKMISKNEYCISNEIEFNTIYEAVSVVKREIVRAMIVNERVRADGRGLKDVRPISIETNILPSTHSSCLFTRGETQALVIGTIAGPKDGQMYEVLTDKSTSMENFMVHYNFPGFSVGEAKPMFGVGRRELGHGNLAKKALEATIDKDYNETVRLVSEILESNGSSSMATVCGGSLALKAAGIPISDLVAGVAMGMVVENDKYAILTDIMGLEDHDGDMDFKVAGTSKGITALQMDIKLGGIELSVLKEALLQAKEGRTHILSLMKDAEKDIVPSGALPLIEQFAIDPSKIMVVIGKAGATIKEIIEKFTVSIDLDKENGTVKVSGGNKQNIIDACEHIKTISNNAPSKKDASKNIDFEKLYSEDEVVIGKVERLADFGAFILLPKGGEGLLHISKISKDRVKNVADVLSIGQELEVKVLKVKKDRIELSSAN</sequence>
<protein>
    <recommendedName>
        <fullName evidence="1">Polyribonucleotide nucleotidyltransferase</fullName>
        <ecNumber evidence="1">2.7.7.8</ecNumber>
    </recommendedName>
    <alternativeName>
        <fullName evidence="1">Polynucleotide phosphorylase</fullName>
        <shortName evidence="1">PNPase</shortName>
    </alternativeName>
</protein>
<feature type="chain" id="PRO_0000329503" description="Polyribonucleotide nucleotidyltransferase">
    <location>
        <begin position="1"/>
        <end position="725"/>
    </location>
</feature>
<feature type="domain" description="KH" evidence="1">
    <location>
        <begin position="571"/>
        <end position="631"/>
    </location>
</feature>
<feature type="domain" description="S1 motif" evidence="1">
    <location>
        <begin position="657"/>
        <end position="724"/>
    </location>
</feature>
<feature type="binding site" evidence="1">
    <location>
        <position position="506"/>
    </location>
    <ligand>
        <name>Mg(2+)</name>
        <dbReference type="ChEBI" id="CHEBI:18420"/>
    </ligand>
</feature>
<feature type="binding site" evidence="1">
    <location>
        <position position="512"/>
    </location>
    <ligand>
        <name>Mg(2+)</name>
        <dbReference type="ChEBI" id="CHEBI:18420"/>
    </ligand>
</feature>